<comment type="function">
    <text evidence="1">This protein is one of the early assembly proteins of the 50S ribosomal subunit, although it is not seen to bind rRNA by itself. It is important during the early stages of 50S assembly.</text>
</comment>
<comment type="subunit">
    <text evidence="1">Part of the 50S ribosomal subunit.</text>
</comment>
<comment type="similarity">
    <text evidence="1">Belongs to the universal ribosomal protein uL13 family.</text>
</comment>
<sequence length="147" mass="16448">MRTYSPKPGDVTRQWHVIDAQDVVLGRLATTAASILRGKHKPIYAPHVDTGDFVIIINADKVHLSGNKRTQKMAYRHSGYPGGLRSVRYDELLDKNPEKAVEKAIKGMLPKNSLGRQMLSKLKVYKGDQHPHGAQQPQPFEITQVAQ</sequence>
<name>RL13_STRCO</name>
<accession>Q53874</accession>
<dbReference type="EMBL" id="U43429">
    <property type="protein sequence ID" value="AAC46060.1"/>
    <property type="molecule type" value="Genomic_DNA"/>
</dbReference>
<dbReference type="EMBL" id="AL939121">
    <property type="protein sequence ID" value="CAA20390.1"/>
    <property type="molecule type" value="Genomic_DNA"/>
</dbReference>
<dbReference type="PIR" id="T35563">
    <property type="entry name" value="T35563"/>
</dbReference>
<dbReference type="RefSeq" id="NP_628892.1">
    <property type="nucleotide sequence ID" value="NC_003888.3"/>
</dbReference>
<dbReference type="RefSeq" id="WP_003974239.1">
    <property type="nucleotide sequence ID" value="NZ_VNID01000016.1"/>
</dbReference>
<dbReference type="SMR" id="Q53874"/>
<dbReference type="FunCoup" id="Q53874">
    <property type="interactions" value="458"/>
</dbReference>
<dbReference type="STRING" id="100226.gene:17762383"/>
<dbReference type="PaxDb" id="100226-SCO4734"/>
<dbReference type="GeneID" id="97462924"/>
<dbReference type="KEGG" id="sco:SCO4734"/>
<dbReference type="PATRIC" id="fig|100226.15.peg.4805"/>
<dbReference type="eggNOG" id="COG0102">
    <property type="taxonomic scope" value="Bacteria"/>
</dbReference>
<dbReference type="HOGENOM" id="CLU_082184_2_2_11"/>
<dbReference type="InParanoid" id="Q53874"/>
<dbReference type="OrthoDB" id="9801330at2"/>
<dbReference type="PhylomeDB" id="Q53874"/>
<dbReference type="Proteomes" id="UP000001973">
    <property type="component" value="Chromosome"/>
</dbReference>
<dbReference type="GO" id="GO:0022625">
    <property type="term" value="C:cytosolic large ribosomal subunit"/>
    <property type="evidence" value="ECO:0000318"/>
    <property type="project" value="GO_Central"/>
</dbReference>
<dbReference type="GO" id="GO:0005840">
    <property type="term" value="C:ribosome"/>
    <property type="evidence" value="ECO:0000318"/>
    <property type="project" value="GO_Central"/>
</dbReference>
<dbReference type="GO" id="GO:0003729">
    <property type="term" value="F:mRNA binding"/>
    <property type="evidence" value="ECO:0000318"/>
    <property type="project" value="GO_Central"/>
</dbReference>
<dbReference type="GO" id="GO:0003735">
    <property type="term" value="F:structural constituent of ribosome"/>
    <property type="evidence" value="ECO:0000318"/>
    <property type="project" value="GO_Central"/>
</dbReference>
<dbReference type="GO" id="GO:0017148">
    <property type="term" value="P:negative regulation of translation"/>
    <property type="evidence" value="ECO:0000318"/>
    <property type="project" value="GO_Central"/>
</dbReference>
<dbReference type="GO" id="GO:0006412">
    <property type="term" value="P:translation"/>
    <property type="evidence" value="ECO:0007669"/>
    <property type="project" value="UniProtKB-UniRule"/>
</dbReference>
<dbReference type="CDD" id="cd00392">
    <property type="entry name" value="Ribosomal_L13"/>
    <property type="match status" value="1"/>
</dbReference>
<dbReference type="FunFam" id="3.90.1180.10:FF:000001">
    <property type="entry name" value="50S ribosomal protein L13"/>
    <property type="match status" value="1"/>
</dbReference>
<dbReference type="Gene3D" id="3.90.1180.10">
    <property type="entry name" value="Ribosomal protein L13"/>
    <property type="match status" value="1"/>
</dbReference>
<dbReference type="HAMAP" id="MF_01366">
    <property type="entry name" value="Ribosomal_uL13"/>
    <property type="match status" value="1"/>
</dbReference>
<dbReference type="InterPro" id="IPR005822">
    <property type="entry name" value="Ribosomal_uL13"/>
</dbReference>
<dbReference type="InterPro" id="IPR005823">
    <property type="entry name" value="Ribosomal_uL13_bac-type"/>
</dbReference>
<dbReference type="InterPro" id="IPR023563">
    <property type="entry name" value="Ribosomal_uL13_CS"/>
</dbReference>
<dbReference type="InterPro" id="IPR036899">
    <property type="entry name" value="Ribosomal_uL13_sf"/>
</dbReference>
<dbReference type="NCBIfam" id="TIGR01066">
    <property type="entry name" value="rplM_bact"/>
    <property type="match status" value="1"/>
</dbReference>
<dbReference type="PANTHER" id="PTHR11545:SF2">
    <property type="entry name" value="LARGE RIBOSOMAL SUBUNIT PROTEIN UL13M"/>
    <property type="match status" value="1"/>
</dbReference>
<dbReference type="PANTHER" id="PTHR11545">
    <property type="entry name" value="RIBOSOMAL PROTEIN L13"/>
    <property type="match status" value="1"/>
</dbReference>
<dbReference type="Pfam" id="PF00572">
    <property type="entry name" value="Ribosomal_L13"/>
    <property type="match status" value="1"/>
</dbReference>
<dbReference type="PIRSF" id="PIRSF002181">
    <property type="entry name" value="Ribosomal_L13"/>
    <property type="match status" value="1"/>
</dbReference>
<dbReference type="SUPFAM" id="SSF52161">
    <property type="entry name" value="Ribosomal protein L13"/>
    <property type="match status" value="1"/>
</dbReference>
<dbReference type="PROSITE" id="PS00783">
    <property type="entry name" value="RIBOSOMAL_L13"/>
    <property type="match status" value="1"/>
</dbReference>
<keyword id="KW-1185">Reference proteome</keyword>
<keyword id="KW-0687">Ribonucleoprotein</keyword>
<keyword id="KW-0689">Ribosomal protein</keyword>
<evidence type="ECO:0000255" key="1">
    <source>
        <dbReference type="HAMAP-Rule" id="MF_01366"/>
    </source>
</evidence>
<evidence type="ECO:0000256" key="2">
    <source>
        <dbReference type="SAM" id="MobiDB-lite"/>
    </source>
</evidence>
<evidence type="ECO:0000305" key="3"/>
<reference key="1">
    <citation type="journal article" date="1997" name="Mol. Gen. Genet.">
        <title>Cloning, sequencing and transcriptional analysis of a Streptomyces coelicolor operon containing the rplM and rpsI genes encoding ribosomal proteins ScoL13 and ScoS9.</title>
        <authorList>
            <person name="Sanchez C."/>
            <person name="Blanco G."/>
            <person name="Mendez C."/>
            <person name="Salas J.A."/>
        </authorList>
    </citation>
    <scope>NUCLEOTIDE SEQUENCE [GENOMIC DNA]</scope>
    <source>
        <strain>A3(2) / NRRL B-16638</strain>
    </source>
</reference>
<reference key="2">
    <citation type="journal article" date="2002" name="Nature">
        <title>Complete genome sequence of the model actinomycete Streptomyces coelicolor A3(2).</title>
        <authorList>
            <person name="Bentley S.D."/>
            <person name="Chater K.F."/>
            <person name="Cerdeno-Tarraga A.-M."/>
            <person name="Challis G.L."/>
            <person name="Thomson N.R."/>
            <person name="James K.D."/>
            <person name="Harris D.E."/>
            <person name="Quail M.A."/>
            <person name="Kieser H."/>
            <person name="Harper D."/>
            <person name="Bateman A."/>
            <person name="Brown S."/>
            <person name="Chandra G."/>
            <person name="Chen C.W."/>
            <person name="Collins M."/>
            <person name="Cronin A."/>
            <person name="Fraser A."/>
            <person name="Goble A."/>
            <person name="Hidalgo J."/>
            <person name="Hornsby T."/>
            <person name="Howarth S."/>
            <person name="Huang C.-H."/>
            <person name="Kieser T."/>
            <person name="Larke L."/>
            <person name="Murphy L.D."/>
            <person name="Oliver K."/>
            <person name="O'Neil S."/>
            <person name="Rabbinowitsch E."/>
            <person name="Rajandream M.A."/>
            <person name="Rutherford K.M."/>
            <person name="Rutter S."/>
            <person name="Seeger K."/>
            <person name="Saunders D."/>
            <person name="Sharp S."/>
            <person name="Squares R."/>
            <person name="Squares S."/>
            <person name="Taylor K."/>
            <person name="Warren T."/>
            <person name="Wietzorrek A."/>
            <person name="Woodward J.R."/>
            <person name="Barrell B.G."/>
            <person name="Parkhill J."/>
            <person name="Hopwood D.A."/>
        </authorList>
    </citation>
    <scope>NUCLEOTIDE SEQUENCE [LARGE SCALE GENOMIC DNA]</scope>
    <source>
        <strain>ATCC BAA-471 / A3(2) / M145</strain>
    </source>
</reference>
<organism>
    <name type="scientific">Streptomyces coelicolor (strain ATCC BAA-471 / A3(2) / M145)</name>
    <dbReference type="NCBI Taxonomy" id="100226"/>
    <lineage>
        <taxon>Bacteria</taxon>
        <taxon>Bacillati</taxon>
        <taxon>Actinomycetota</taxon>
        <taxon>Actinomycetes</taxon>
        <taxon>Kitasatosporales</taxon>
        <taxon>Streptomycetaceae</taxon>
        <taxon>Streptomyces</taxon>
        <taxon>Streptomyces albidoflavus group</taxon>
    </lineage>
</organism>
<feature type="chain" id="PRO_0000133751" description="Large ribosomal subunit protein uL13">
    <location>
        <begin position="1"/>
        <end position="147"/>
    </location>
</feature>
<feature type="region of interest" description="Disordered" evidence="2">
    <location>
        <begin position="128"/>
        <end position="147"/>
    </location>
</feature>
<protein>
    <recommendedName>
        <fullName evidence="1">Large ribosomal subunit protein uL13</fullName>
    </recommendedName>
    <alternativeName>
        <fullName evidence="3">50S ribosomal protein L13</fullName>
    </alternativeName>
</protein>
<gene>
    <name evidence="1" type="primary">rplM</name>
    <name type="ordered locus">SCO4734</name>
    <name type="ORF">SC6G4.12</name>
</gene>
<proteinExistence type="inferred from homology"/>